<accession>P26637</accession>
<accession>D6W3K8</accession>
<proteinExistence type="evidence at protein level"/>
<name>SYLC_YEAST</name>
<keyword id="KW-0007">Acetylation</keyword>
<keyword id="KW-0030">Aminoacyl-tRNA synthetase</keyword>
<keyword id="KW-0067">ATP-binding</keyword>
<keyword id="KW-0963">Cytoplasm</keyword>
<keyword id="KW-0436">Ligase</keyword>
<keyword id="KW-0547">Nucleotide-binding</keyword>
<keyword id="KW-0597">Phosphoprotein</keyword>
<keyword id="KW-0648">Protein biosynthesis</keyword>
<keyword id="KW-1185">Reference proteome</keyword>
<comment type="catalytic activity">
    <reaction>
        <text>tRNA(Leu) + L-leucine + ATP = L-leucyl-tRNA(Leu) + AMP + diphosphate</text>
        <dbReference type="Rhea" id="RHEA:11688"/>
        <dbReference type="Rhea" id="RHEA-COMP:9613"/>
        <dbReference type="Rhea" id="RHEA-COMP:9622"/>
        <dbReference type="ChEBI" id="CHEBI:30616"/>
        <dbReference type="ChEBI" id="CHEBI:33019"/>
        <dbReference type="ChEBI" id="CHEBI:57427"/>
        <dbReference type="ChEBI" id="CHEBI:78442"/>
        <dbReference type="ChEBI" id="CHEBI:78494"/>
        <dbReference type="ChEBI" id="CHEBI:456215"/>
        <dbReference type="EC" id="6.1.1.4"/>
    </reaction>
</comment>
<comment type="subcellular location">
    <subcellularLocation>
        <location>Cytoplasm</location>
    </subcellularLocation>
</comment>
<comment type="miscellaneous">
    <text evidence="2">Present with 158000 molecules/cell in log phase SD medium.</text>
</comment>
<comment type="similarity">
    <text evidence="3">Belongs to the class-I aminoacyl-tRNA synthetase family.</text>
</comment>
<organism>
    <name type="scientific">Saccharomyces cerevisiae (strain ATCC 204508 / S288c)</name>
    <name type="common">Baker's yeast</name>
    <dbReference type="NCBI Taxonomy" id="559292"/>
    <lineage>
        <taxon>Eukaryota</taxon>
        <taxon>Fungi</taxon>
        <taxon>Dikarya</taxon>
        <taxon>Ascomycota</taxon>
        <taxon>Saccharomycotina</taxon>
        <taxon>Saccharomycetes</taxon>
        <taxon>Saccharomycetales</taxon>
        <taxon>Saccharomycetaceae</taxon>
        <taxon>Saccharomyces</taxon>
    </lineage>
</organism>
<protein>
    <recommendedName>
        <fullName>Leucine--tRNA ligase, cytoplasmic</fullName>
        <ecNumber>6.1.1.4</ecNumber>
    </recommendedName>
    <alternativeName>
        <fullName>Leucyl-tRNA synthetase</fullName>
        <shortName>LeuRS</shortName>
    </alternativeName>
</protein>
<dbReference type="EC" id="6.1.1.4"/>
<dbReference type="EMBL" id="X62878">
    <property type="protein sequence ID" value="CAA44671.1"/>
    <property type="molecule type" value="Genomic_DNA"/>
</dbReference>
<dbReference type="EMBL" id="X96770">
    <property type="protein sequence ID" value="CAA65561.1"/>
    <property type="molecule type" value="Genomic_DNA"/>
</dbReference>
<dbReference type="EMBL" id="Z73516">
    <property type="protein sequence ID" value="CAA97865.1"/>
    <property type="molecule type" value="Genomic_DNA"/>
</dbReference>
<dbReference type="EMBL" id="BK006949">
    <property type="protein sequence ID" value="DAA11274.1"/>
    <property type="molecule type" value="Genomic_DNA"/>
</dbReference>
<dbReference type="PIR" id="JC1421">
    <property type="entry name" value="JC1421"/>
</dbReference>
<dbReference type="RefSeq" id="NP_015165.1">
    <property type="nucleotide sequence ID" value="NM_001183974.1"/>
</dbReference>
<dbReference type="SMR" id="P26637"/>
<dbReference type="BioGRID" id="36023">
    <property type="interactions" value="394"/>
</dbReference>
<dbReference type="DIP" id="DIP-6365N"/>
<dbReference type="FunCoup" id="P26637">
    <property type="interactions" value="1419"/>
</dbReference>
<dbReference type="IntAct" id="P26637">
    <property type="interactions" value="45"/>
</dbReference>
<dbReference type="MINT" id="P26637"/>
<dbReference type="STRING" id="4932.YPL160W"/>
<dbReference type="BindingDB" id="P26637"/>
<dbReference type="ChEMBL" id="CHEMBL1075253"/>
<dbReference type="DrugCentral" id="P26637"/>
<dbReference type="iPTMnet" id="P26637"/>
<dbReference type="PaxDb" id="4932-YPL160W"/>
<dbReference type="PeptideAtlas" id="P26637"/>
<dbReference type="EnsemblFungi" id="YPL160W_mRNA">
    <property type="protein sequence ID" value="YPL160W"/>
    <property type="gene ID" value="YPL160W"/>
</dbReference>
<dbReference type="GeneID" id="855943"/>
<dbReference type="KEGG" id="sce:YPL160W"/>
<dbReference type="AGR" id="SGD:S000006081"/>
<dbReference type="SGD" id="S000006081">
    <property type="gene designation" value="CDC60"/>
</dbReference>
<dbReference type="VEuPathDB" id="FungiDB:YPL160W"/>
<dbReference type="eggNOG" id="KOG0437">
    <property type="taxonomic scope" value="Eukaryota"/>
</dbReference>
<dbReference type="GeneTree" id="ENSGT00390000012163"/>
<dbReference type="HOGENOM" id="CLU_004174_1_1_1"/>
<dbReference type="InParanoid" id="P26637"/>
<dbReference type="OMA" id="KFIEWQF"/>
<dbReference type="OrthoDB" id="10249672at2759"/>
<dbReference type="BioCyc" id="YEAST:G3O-34056-MONOMER"/>
<dbReference type="BRENDA" id="6.1.1.4">
    <property type="organism ID" value="984"/>
</dbReference>
<dbReference type="BioGRID-ORCS" id="855943">
    <property type="hits" value="4 hits in 10 CRISPR screens"/>
</dbReference>
<dbReference type="PRO" id="PR:P26637"/>
<dbReference type="Proteomes" id="UP000002311">
    <property type="component" value="Chromosome XVI"/>
</dbReference>
<dbReference type="RNAct" id="P26637">
    <property type="molecule type" value="protein"/>
</dbReference>
<dbReference type="GO" id="GO:0005737">
    <property type="term" value="C:cytoplasm"/>
    <property type="evidence" value="ECO:0000314"/>
    <property type="project" value="SGD"/>
</dbReference>
<dbReference type="GO" id="GO:0002161">
    <property type="term" value="F:aminoacyl-tRNA deacylase activity"/>
    <property type="evidence" value="ECO:0007669"/>
    <property type="project" value="InterPro"/>
</dbReference>
<dbReference type="GO" id="GO:0005524">
    <property type="term" value="F:ATP binding"/>
    <property type="evidence" value="ECO:0007669"/>
    <property type="project" value="UniProtKB-KW"/>
</dbReference>
<dbReference type="GO" id="GO:0004823">
    <property type="term" value="F:leucine-tRNA ligase activity"/>
    <property type="evidence" value="ECO:0000314"/>
    <property type="project" value="SGD"/>
</dbReference>
<dbReference type="GO" id="GO:1990825">
    <property type="term" value="F:sequence-specific mRNA binding"/>
    <property type="evidence" value="ECO:0000314"/>
    <property type="project" value="SGD"/>
</dbReference>
<dbReference type="GO" id="GO:0006429">
    <property type="term" value="P:leucyl-tRNA aminoacylation"/>
    <property type="evidence" value="ECO:0000314"/>
    <property type="project" value="SGD"/>
</dbReference>
<dbReference type="GO" id="GO:1903432">
    <property type="term" value="P:regulation of TORC1 signaling"/>
    <property type="evidence" value="ECO:0000315"/>
    <property type="project" value="SGD"/>
</dbReference>
<dbReference type="CDD" id="cd07959">
    <property type="entry name" value="Anticodon_Ia_Leu_AEc"/>
    <property type="match status" value="1"/>
</dbReference>
<dbReference type="CDD" id="cd00812">
    <property type="entry name" value="LeuRS_core"/>
    <property type="match status" value="1"/>
</dbReference>
<dbReference type="FunFam" id="3.90.740.10:FF:000001">
    <property type="entry name" value="Leucine--tRNA ligase, cytoplasmic"/>
    <property type="match status" value="1"/>
</dbReference>
<dbReference type="Gene3D" id="3.40.50.620">
    <property type="entry name" value="HUPs"/>
    <property type="match status" value="1"/>
</dbReference>
<dbReference type="Gene3D" id="1.10.730.10">
    <property type="entry name" value="Isoleucyl-tRNA Synthetase, Domain 1"/>
    <property type="match status" value="1"/>
</dbReference>
<dbReference type="Gene3D" id="3.90.740.10">
    <property type="entry name" value="Valyl/Leucyl/Isoleucyl-tRNA synthetase, editing domain"/>
    <property type="match status" value="1"/>
</dbReference>
<dbReference type="InterPro" id="IPR002300">
    <property type="entry name" value="aa-tRNA-synth_Ia"/>
</dbReference>
<dbReference type="InterPro" id="IPR004493">
    <property type="entry name" value="Leu-tRNA-synth_Ia_arc/euk"/>
</dbReference>
<dbReference type="InterPro" id="IPR013155">
    <property type="entry name" value="M/V/L/I-tRNA-synth_anticd-bd"/>
</dbReference>
<dbReference type="InterPro" id="IPR055416">
    <property type="entry name" value="RBD_LARS1"/>
</dbReference>
<dbReference type="InterPro" id="IPR014729">
    <property type="entry name" value="Rossmann-like_a/b/a_fold"/>
</dbReference>
<dbReference type="InterPro" id="IPR009080">
    <property type="entry name" value="tRNAsynth_Ia_anticodon-bd"/>
</dbReference>
<dbReference type="InterPro" id="IPR009008">
    <property type="entry name" value="Val/Leu/Ile-tRNA-synth_edit"/>
</dbReference>
<dbReference type="NCBIfam" id="TIGR00395">
    <property type="entry name" value="leuS_arch"/>
    <property type="match status" value="1"/>
</dbReference>
<dbReference type="NCBIfam" id="NF008957">
    <property type="entry name" value="PRK12300.1"/>
    <property type="match status" value="1"/>
</dbReference>
<dbReference type="PANTHER" id="PTHR45794:SF1">
    <property type="entry name" value="LEUCINE--TRNA LIGASE, CYTOPLASMIC"/>
    <property type="match status" value="1"/>
</dbReference>
<dbReference type="PANTHER" id="PTHR45794">
    <property type="entry name" value="LEUCYL-TRNA SYNTHETASE"/>
    <property type="match status" value="1"/>
</dbReference>
<dbReference type="Pfam" id="PF08264">
    <property type="entry name" value="Anticodon_1"/>
    <property type="match status" value="1"/>
</dbReference>
<dbReference type="Pfam" id="PF24810">
    <property type="entry name" value="RBD_LARS1"/>
    <property type="match status" value="1"/>
</dbReference>
<dbReference type="Pfam" id="PF00133">
    <property type="entry name" value="tRNA-synt_1"/>
    <property type="match status" value="2"/>
</dbReference>
<dbReference type="SUPFAM" id="SSF47323">
    <property type="entry name" value="Anticodon-binding domain of a subclass of class I aminoacyl-tRNA synthetases"/>
    <property type="match status" value="1"/>
</dbReference>
<dbReference type="SUPFAM" id="SSF52374">
    <property type="entry name" value="Nucleotidylyl transferase"/>
    <property type="match status" value="1"/>
</dbReference>
<dbReference type="SUPFAM" id="SSF50677">
    <property type="entry name" value="ValRS/IleRS/LeuRS editing domain"/>
    <property type="match status" value="1"/>
</dbReference>
<dbReference type="PROSITE" id="PS00178">
    <property type="entry name" value="AA_TRNA_LIGASE_I"/>
    <property type="match status" value="1"/>
</dbReference>
<feature type="initiator methionine" description="Removed" evidence="5">
    <location>
        <position position="1"/>
    </location>
</feature>
<feature type="chain" id="PRO_0000152155" description="Leucine--tRNA ligase, cytoplasmic">
    <location>
        <begin position="2"/>
        <end position="1090"/>
    </location>
</feature>
<feature type="short sequence motif" description="'HIGH' region">
    <location>
        <begin position="66"/>
        <end position="76"/>
    </location>
</feature>
<feature type="short sequence motif" description="'KMSKS' region">
    <location>
        <begin position="729"/>
        <end position="733"/>
    </location>
</feature>
<feature type="binding site" evidence="1">
    <location>
        <position position="732"/>
    </location>
    <ligand>
        <name>ATP</name>
        <dbReference type="ChEBI" id="CHEBI:30616"/>
    </ligand>
</feature>
<feature type="modified residue" description="N-acetylserine" evidence="5">
    <location>
        <position position="2"/>
    </location>
</feature>
<feature type="modified residue" description="Phosphothreonine" evidence="4">
    <location>
        <position position="142"/>
    </location>
</feature>
<sequence length="1090" mass="124142">MSSGLVLENTARRDALIAIEKKYQKIWAEEHQFEIDAPSIEDEPITMDSEELHRTYPKFMSSMAYPYMNGVMHAGHCFTLSKVEFSIGFERMNGKRALFPLGFHCTGMPILACADKLKREAELFGKNFDNVPAEEEEIKEETPAEKDHEDVTKFKAKKSKAAAKKGRGKYQFEIMLQLGIPREEIIKFADAKYWLTYFPPLCESDCTSLGARIDWRRSFVTTDANPYYDAFIRWQMNKLKAAGKIKFGERYTIYSEKDGQACMDHDRQSGEGVTPQEYIGVKIEALEFADDAAKIIDSSSDLDKSKKFYFVAATLRPETMYGQTCCFVSPTIEYGIFDAGDSYFITTERAFKNMSYQKLTPKRGFYKPIVTVPGKAFIGTKIHAPQSVYPELRILPMETVIATKGTGVVTCVPSNSPDDYITTKDLLHKPEYYGIKPEWIDHEIVPIMHTEKYGDLTAKAIVEEKKIQSPKDKNLLAEAKKIAYKEDYYTGTMIYGPYKGEKVEQAKNKVKADMIAAGEAFVYNEPESQVMSRSGDDCIVSLEDQWYVDYGEESWKKQAIECLEGMQLFAPEVKNAFEGVLDWLKNWAVCRTYGLGTRLPWDEKYLVESLSDSTIYQSFYTIAHLLFKDYYGNEIGPLGISADQMTDEVFDYIFQHQDDVKNTNIPLPALQKLRREFEYFYPLDVSISGKDLIPNHLTFFIYTHVALFPKKFWPKGIRANGHLMLNNSKMSKSTGNFMTLEQTVEKFGADAARIAFADAGDTVEDANFDESNANAAILRLFNLKEWAEEITKESNLRTGEITDFFDIAFEHEMNALIEKTYEQYALTNYKNALKYGLFDFQAARDYYREASGVMHKDLIARYIETQALLLAPIAPHFAEYIYREVLGNQTSVQNAKFPRASKPVDKGVLAALDYLRNLQRSIREGEGQALKKKKGKSAEIDASKPVKLTLLISESFPEWQSQCVEIVRKLFSEQTLDDNKKVREHIEPKEMKRAMPFISLLKQRLANEKPEDVFERELQFSEIDTVKAAARNVKKAAQALKIAEFSAISFPYGAKTGKDIFTGEEVEIPPVTKIVENAVPGNPGVVFQNI</sequence>
<evidence type="ECO:0000250" key="1"/>
<evidence type="ECO:0000269" key="2">
    <source>
    </source>
</evidence>
<evidence type="ECO:0000305" key="3"/>
<evidence type="ECO:0007744" key="4">
    <source>
    </source>
</evidence>
<evidence type="ECO:0007744" key="5">
    <source>
    </source>
</evidence>
<reference key="1">
    <citation type="journal article" date="1992" name="Gene">
        <title>The cell division cycle gene CDC60 encodes cytosolic leucyl-tRNA synthetase in Saccharomyces cerevisiae.</title>
        <authorList>
            <person name="Hohmann S."/>
            <person name="Thevelein J.M."/>
        </authorList>
    </citation>
    <scope>NUCLEOTIDE SEQUENCE [GENOMIC DNA]</scope>
</reference>
<reference key="2">
    <citation type="journal article" date="1996" name="Yeast">
        <title>The sequence of 55 kb on the left arm of yeast chromosome XVI identifies a small nuclear RNA, a new putative protein kinase and two new putative regulators.</title>
        <authorList>
            <person name="Purnelle B."/>
            <person name="Coster F."/>
            <person name="Goffeau A."/>
        </authorList>
    </citation>
    <scope>NUCLEOTIDE SEQUENCE [GENOMIC DNA]</scope>
    <source>
        <strain>ATCC 204511 / S288c / AB972</strain>
    </source>
</reference>
<reference key="3">
    <citation type="journal article" date="1997" name="Nature">
        <title>The nucleotide sequence of Saccharomyces cerevisiae chromosome XVI.</title>
        <authorList>
            <person name="Bussey H."/>
            <person name="Storms R.K."/>
            <person name="Ahmed A."/>
            <person name="Albermann K."/>
            <person name="Allen E."/>
            <person name="Ansorge W."/>
            <person name="Araujo R."/>
            <person name="Aparicio A."/>
            <person name="Barrell B.G."/>
            <person name="Badcock K."/>
            <person name="Benes V."/>
            <person name="Botstein D."/>
            <person name="Bowman S."/>
            <person name="Brueckner M."/>
            <person name="Carpenter J."/>
            <person name="Cherry J.M."/>
            <person name="Chung E."/>
            <person name="Churcher C.M."/>
            <person name="Coster F."/>
            <person name="Davis K."/>
            <person name="Davis R.W."/>
            <person name="Dietrich F.S."/>
            <person name="Delius H."/>
            <person name="DiPaolo T."/>
            <person name="Dubois E."/>
            <person name="Duesterhoeft A."/>
            <person name="Duncan M."/>
            <person name="Floeth M."/>
            <person name="Fortin N."/>
            <person name="Friesen J.D."/>
            <person name="Fritz C."/>
            <person name="Goffeau A."/>
            <person name="Hall J."/>
            <person name="Hebling U."/>
            <person name="Heumann K."/>
            <person name="Hilbert H."/>
            <person name="Hillier L.W."/>
            <person name="Hunicke-Smith S."/>
            <person name="Hyman R.W."/>
            <person name="Johnston M."/>
            <person name="Kalman S."/>
            <person name="Kleine K."/>
            <person name="Komp C."/>
            <person name="Kurdi O."/>
            <person name="Lashkari D."/>
            <person name="Lew H."/>
            <person name="Lin A."/>
            <person name="Lin D."/>
            <person name="Louis E.J."/>
            <person name="Marathe R."/>
            <person name="Messenguy F."/>
            <person name="Mewes H.-W."/>
            <person name="Mirtipati S."/>
            <person name="Moestl D."/>
            <person name="Mueller-Auer S."/>
            <person name="Namath A."/>
            <person name="Nentwich U."/>
            <person name="Oefner P."/>
            <person name="Pearson D."/>
            <person name="Petel F.X."/>
            <person name="Pohl T.M."/>
            <person name="Purnelle B."/>
            <person name="Rajandream M.A."/>
            <person name="Rechmann S."/>
            <person name="Rieger M."/>
            <person name="Riles L."/>
            <person name="Roberts D."/>
            <person name="Schaefer M."/>
            <person name="Scharfe M."/>
            <person name="Scherens B."/>
            <person name="Schramm S."/>
            <person name="Schroeder M."/>
            <person name="Sdicu A.-M."/>
            <person name="Tettelin H."/>
            <person name="Urrestarazu L.A."/>
            <person name="Ushinsky S."/>
            <person name="Vierendeels F."/>
            <person name="Vissers S."/>
            <person name="Voss H."/>
            <person name="Walsh S.V."/>
            <person name="Wambutt R."/>
            <person name="Wang Y."/>
            <person name="Wedler E."/>
            <person name="Wedler H."/>
            <person name="Winnett E."/>
            <person name="Zhong W.-W."/>
            <person name="Zollner A."/>
            <person name="Vo D.H."/>
            <person name="Hani J."/>
        </authorList>
    </citation>
    <scope>NUCLEOTIDE SEQUENCE [LARGE SCALE GENOMIC DNA]</scope>
    <source>
        <strain>ATCC 204508 / S288c</strain>
    </source>
</reference>
<reference key="4">
    <citation type="journal article" date="2014" name="G3 (Bethesda)">
        <title>The reference genome sequence of Saccharomyces cerevisiae: Then and now.</title>
        <authorList>
            <person name="Engel S.R."/>
            <person name="Dietrich F.S."/>
            <person name="Fisk D.G."/>
            <person name="Binkley G."/>
            <person name="Balakrishnan R."/>
            <person name="Costanzo M.C."/>
            <person name="Dwight S.S."/>
            <person name="Hitz B.C."/>
            <person name="Karra K."/>
            <person name="Nash R.S."/>
            <person name="Weng S."/>
            <person name="Wong E.D."/>
            <person name="Lloyd P."/>
            <person name="Skrzypek M.S."/>
            <person name="Miyasato S.R."/>
            <person name="Simison M."/>
            <person name="Cherry J.M."/>
        </authorList>
    </citation>
    <scope>GENOME REANNOTATION</scope>
    <source>
        <strain>ATCC 204508 / S288c</strain>
    </source>
</reference>
<reference key="5">
    <citation type="journal article" date="2003" name="Nature">
        <title>Global analysis of protein expression in yeast.</title>
        <authorList>
            <person name="Ghaemmaghami S."/>
            <person name="Huh W.-K."/>
            <person name="Bower K."/>
            <person name="Howson R.W."/>
            <person name="Belle A."/>
            <person name="Dephoure N."/>
            <person name="O'Shea E.K."/>
            <person name="Weissman J.S."/>
        </authorList>
    </citation>
    <scope>LEVEL OF PROTEIN EXPRESSION [LARGE SCALE ANALYSIS]</scope>
</reference>
<reference key="6">
    <citation type="journal article" date="2008" name="Mol. Cell. Proteomics">
        <title>A multidimensional chromatography technology for in-depth phosphoproteome analysis.</title>
        <authorList>
            <person name="Albuquerque C.P."/>
            <person name="Smolka M.B."/>
            <person name="Payne S.H."/>
            <person name="Bafna V."/>
            <person name="Eng J."/>
            <person name="Zhou H."/>
        </authorList>
    </citation>
    <scope>IDENTIFICATION BY MASS SPECTROMETRY [LARGE SCALE ANALYSIS]</scope>
</reference>
<reference key="7">
    <citation type="journal article" date="2009" name="Science">
        <title>Global analysis of Cdk1 substrate phosphorylation sites provides insights into evolution.</title>
        <authorList>
            <person name="Holt L.J."/>
            <person name="Tuch B.B."/>
            <person name="Villen J."/>
            <person name="Johnson A.D."/>
            <person name="Gygi S.P."/>
            <person name="Morgan D.O."/>
        </authorList>
    </citation>
    <scope>PHOSPHORYLATION [LARGE SCALE ANALYSIS] AT THR-142</scope>
    <scope>IDENTIFICATION BY MASS SPECTROMETRY [LARGE SCALE ANALYSIS]</scope>
</reference>
<reference key="8">
    <citation type="journal article" date="2012" name="Proc. Natl. Acad. Sci. U.S.A.">
        <title>N-terminal acetylome analyses and functional insights of the N-terminal acetyltransferase NatB.</title>
        <authorList>
            <person name="Van Damme P."/>
            <person name="Lasa M."/>
            <person name="Polevoda B."/>
            <person name="Gazquez C."/>
            <person name="Elosegui-Artola A."/>
            <person name="Kim D.S."/>
            <person name="De Juan-Pardo E."/>
            <person name="Demeyer K."/>
            <person name="Hole K."/>
            <person name="Larrea E."/>
            <person name="Timmerman E."/>
            <person name="Prieto J."/>
            <person name="Arnesen T."/>
            <person name="Sherman F."/>
            <person name="Gevaert K."/>
            <person name="Aldabe R."/>
        </authorList>
    </citation>
    <scope>ACETYLATION [LARGE SCALE ANALYSIS] AT SER-2</scope>
    <scope>CLEAVAGE OF INITIATOR METHIONINE [LARGE SCALE ANALYSIS]</scope>
    <scope>IDENTIFICATION BY MASS SPECTROMETRY [LARGE SCALE ANALYSIS]</scope>
</reference>
<gene>
    <name type="primary">CDC60</name>
    <name type="ordered locus">YPL160W</name>
    <name type="ORF">P2564</name>
</gene>